<comment type="function">
    <text evidence="1">Component of the cytochrome c oxidase, the last enzyme in the mitochondrial electron transport chain which drives oxidative phosphorylation. The respiratory chain contains 3 multisubunit complexes succinate dehydrogenase (complex II, CII), ubiquinol-cytochrome c oxidoreductase (cytochrome b-c1 complex, complex III, CIII) and cytochrome c oxidase (complex IV, CIV), that cooperate to transfer electrons derived from NADH and succinate to molecular oxygen, creating an electrochemical gradient over the inner membrane that drives transmembrane transport and the ATP synthase. Cytochrome c oxidase is the component of the respiratory chain that catalyzes the reduction of oxygen to water. Electrons originating from reduced cytochrome c in the intermembrane space (IMS) are transferred via the dinuclear copper A center (CU(A)) of subunit 2 and heme A of subunit 1 to the active site in subunit 1, a binuclear center (BNC) formed by heme A3 and copper B (CU(B)). The BNC reduces molecular oxygen to 2 water molecules using 4 electrons from cytochrome c in the IMS and 4 protons from the mitochondrial matrix.</text>
</comment>
<comment type="pathway">
    <text evidence="1">Energy metabolism; oxidative phosphorylation.</text>
</comment>
<comment type="subunit">
    <text evidence="2">Component of the cytochrome c oxidase (complex IV, CIV), a multisubunit enzyme composed of 14 subunits. The complex is composed of a catalytic core of 3 subunits MT-CO1, MT-CO2 and MT-CO3, encoded in the mitochondrial DNA, and 11 supernumerary subunits COX4I, COX5A, COX5B, COX6A, COX6B, COX6C, COX7A, COX7B, COX7C, COX8 and NDUFA4, which are encoded in the nuclear genome. The complex exists as a monomer or a dimer and forms supercomplexes (SCs) in the inner mitochondrial membrane with NADH-ubiquinone oxidoreductase (complex I, CI) and ubiquinol-cytochrome c oxidoreductase (cytochrome b-c1 complex, complex III, CIII), resulting in different assemblies (supercomplex SCI(1)III(2)IV(1) and megacomplex MCI(2)III(2)IV(2)).</text>
</comment>
<comment type="subcellular location">
    <subcellularLocation>
        <location evidence="2">Mitochondrion inner membrane</location>
        <topology evidence="2">Single-pass membrane protein</topology>
    </subcellularLocation>
</comment>
<comment type="PTM">
    <text evidence="2">In response to mitochondrial stress, the precursor protein is ubiquitinated by the SIFI complex in the cytoplasm before mitochondrial import, leading to its degradation. Within the SIFI complex, UBR4 initiates ubiquitin chain that are further elongated or branched by KCMF1.</text>
</comment>
<comment type="similarity">
    <text evidence="3">Belongs to the cytochrome c oxidase VIII family.</text>
</comment>
<evidence type="ECO:0000250" key="1">
    <source>
        <dbReference type="UniProtKB" id="P10175"/>
    </source>
</evidence>
<evidence type="ECO:0000250" key="2">
    <source>
        <dbReference type="UniProtKB" id="P10176"/>
    </source>
</evidence>
<evidence type="ECO:0000305" key="3"/>
<accession>Q862Z8</accession>
<feature type="transit peptide" description="Mitochondrion" evidence="2">
    <location>
        <begin position="1"/>
        <end position="25"/>
    </location>
</feature>
<feature type="chain" id="PRO_0000006198" description="Cytochrome c oxidase subunit 8A, mitochondrial">
    <location>
        <begin position="26"/>
        <end position="69"/>
    </location>
</feature>
<feature type="topological domain" description="Mitochondrial matrix" evidence="2">
    <location>
        <begin position="26"/>
        <end position="36"/>
    </location>
</feature>
<feature type="transmembrane region" description="Helical" evidence="1">
    <location>
        <begin position="37"/>
        <end position="60"/>
    </location>
</feature>
<feature type="topological domain" description="Mitochondrial intermembrane" evidence="2">
    <location>
        <begin position="61"/>
        <end position="69"/>
    </location>
</feature>
<feature type="short sequence motif" description="SIFI-degron" evidence="2">
    <location>
        <begin position="2"/>
        <end position="19"/>
    </location>
</feature>
<reference key="1">
    <citation type="journal article" date="2003" name="Proc. Natl. Acad. Sci. U.S.A.">
        <title>Adaptive evolution of cytochrome c oxidase subunit VIII in anthropoid primates.</title>
        <authorList>
            <person name="Goldberg A."/>
            <person name="Wildman D.E."/>
            <person name="Schmidt T.R."/>
            <person name="Huttemann M."/>
            <person name="Goodman M."/>
            <person name="Weiss M.L."/>
            <person name="Grossman L.I."/>
        </authorList>
    </citation>
    <scope>NUCLEOTIDE SEQUENCE [GENOMIC DNA]</scope>
</reference>
<gene>
    <name type="primary">COX8A</name>
    <name type="synonym">COX8</name>
    <name type="synonym">COX8L</name>
</gene>
<protein>
    <recommendedName>
        <fullName>Cytochrome c oxidase subunit 8A, mitochondrial</fullName>
    </recommendedName>
    <alternativeName>
        <fullName>Cytochrome c oxidase polypeptide VIII-liver/heart</fullName>
    </alternativeName>
    <alternativeName>
        <fullName>Cytochrome c oxidase subunit 8-2</fullName>
    </alternativeName>
</protein>
<organism>
    <name type="scientific">Theropithecus gelada</name>
    <name type="common">Gelada baboon</name>
    <dbReference type="NCBI Taxonomy" id="9565"/>
    <lineage>
        <taxon>Eukaryota</taxon>
        <taxon>Metazoa</taxon>
        <taxon>Chordata</taxon>
        <taxon>Craniata</taxon>
        <taxon>Vertebrata</taxon>
        <taxon>Euteleostomi</taxon>
        <taxon>Mammalia</taxon>
        <taxon>Eutheria</taxon>
        <taxon>Euarchontoglires</taxon>
        <taxon>Primates</taxon>
        <taxon>Haplorrhini</taxon>
        <taxon>Catarrhini</taxon>
        <taxon>Cercopithecidae</taxon>
        <taxon>Cercopithecinae</taxon>
        <taxon>Theropithecus</taxon>
    </lineage>
</organism>
<dbReference type="EMBL" id="AY254816">
    <property type="protein sequence ID" value="AAP32247.1"/>
    <property type="molecule type" value="Genomic_DNA"/>
</dbReference>
<dbReference type="EMBL" id="AY254815">
    <property type="protein sequence ID" value="AAP32247.1"/>
    <property type="status" value="JOINED"/>
    <property type="molecule type" value="Genomic_DNA"/>
</dbReference>
<dbReference type="SMR" id="Q862Z8"/>
<dbReference type="Ensembl" id="ENSTGET00000019784.1">
    <property type="protein sequence ID" value="ENSTGEP00000016544.1"/>
    <property type="gene ID" value="ENSTGEG00000013378.1"/>
</dbReference>
<dbReference type="UniPathway" id="UPA00705"/>
<dbReference type="Proteomes" id="UP000694411">
    <property type="component" value="Chromosome 14"/>
</dbReference>
<dbReference type="GO" id="GO:0005743">
    <property type="term" value="C:mitochondrial inner membrane"/>
    <property type="evidence" value="ECO:0007669"/>
    <property type="project" value="UniProtKB-SubCell"/>
</dbReference>
<dbReference type="GO" id="GO:0045277">
    <property type="term" value="C:respiratory chain complex IV"/>
    <property type="evidence" value="ECO:0007669"/>
    <property type="project" value="InterPro"/>
</dbReference>
<dbReference type="GO" id="GO:0006123">
    <property type="term" value="P:mitochondrial electron transport, cytochrome c to oxygen"/>
    <property type="evidence" value="ECO:0007669"/>
    <property type="project" value="InterPro"/>
</dbReference>
<dbReference type="FunFam" id="4.10.81.10:FF:000001">
    <property type="entry name" value="Cytochrome c oxidase subunit 8B, mitochondrial"/>
    <property type="match status" value="1"/>
</dbReference>
<dbReference type="Gene3D" id="4.10.81.10">
    <property type="entry name" value="Cytochrome c oxidase, subunit 8"/>
    <property type="match status" value="1"/>
</dbReference>
<dbReference type="InterPro" id="IPR003205">
    <property type="entry name" value="Cyt_c_oxidase_su8"/>
</dbReference>
<dbReference type="InterPro" id="IPR036548">
    <property type="entry name" value="Cyt_c_oxidase_su8_sf"/>
</dbReference>
<dbReference type="PANTHER" id="PTHR16717">
    <property type="entry name" value="CYTOCHROME C OXIDASE POLYPEPTIDE VIII"/>
    <property type="match status" value="1"/>
</dbReference>
<dbReference type="PANTHER" id="PTHR16717:SF1">
    <property type="entry name" value="CYTOCHROME C OXIDASE SUBUNIT 8A, MITOCHONDRIAL"/>
    <property type="match status" value="1"/>
</dbReference>
<dbReference type="Pfam" id="PF02285">
    <property type="entry name" value="COX8"/>
    <property type="match status" value="1"/>
</dbReference>
<dbReference type="SUPFAM" id="SSF81431">
    <property type="entry name" value="Mitochondrial cytochrome c oxidase subunit VIIIb (aka IX)"/>
    <property type="match status" value="1"/>
</dbReference>
<sequence length="69" mass="7631">MSVLTSLLLRGLTGSARRLPVPRAKVHSMPPEEELGTLEKAIALTSCFVSLFLPAGWILSHLEDYKRPE</sequence>
<name>COX8A_THEGE</name>
<keyword id="KW-0472">Membrane</keyword>
<keyword id="KW-0496">Mitochondrion</keyword>
<keyword id="KW-0999">Mitochondrion inner membrane</keyword>
<keyword id="KW-1185">Reference proteome</keyword>
<keyword id="KW-0809">Transit peptide</keyword>
<keyword id="KW-0812">Transmembrane</keyword>
<keyword id="KW-1133">Transmembrane helix</keyword>
<keyword id="KW-0832">Ubl conjugation</keyword>
<proteinExistence type="inferred from homology"/>